<name>CFA20_XENTR</name>
<keyword id="KW-0966">Cell projection</keyword>
<keyword id="KW-0969">Cilium</keyword>
<keyword id="KW-0963">Cytoplasm</keyword>
<keyword id="KW-0206">Cytoskeleton</keyword>
<keyword id="KW-0493">Microtubule</keyword>
<keyword id="KW-0539">Nucleus</keyword>
<keyword id="KW-1185">Reference proteome</keyword>
<sequence length="193" mass="22734">MFKNTFQSGFLSILYSIGSKPLQIWDKKVRNGHIKRITDNDIQSLVLEVEGTNVSTTYITCPADPKKTLGIKLPFLVMIIKNLKKYFTFEVQVLDDKNVRRRFRASNYQSTTRVKPFICTMPMRLDDGWNQIQFNLSDFTRRAYGTNYIETLRVQIHANCRIRRVYFSDRLYSEDELPAEFKLYLPVQNKAKQ</sequence>
<protein>
    <recommendedName>
        <fullName>Cilia- and flagella-associated protein 20</fullName>
    </recommendedName>
</protein>
<accession>Q6GL74</accession>
<reference key="1">
    <citation type="submission" date="2004-06" db="EMBL/GenBank/DDBJ databases">
        <authorList>
            <consortium name="NIH - Xenopus Gene Collection (XGC) project"/>
        </authorList>
    </citation>
    <scope>NUCLEOTIDE SEQUENCE [LARGE SCALE MRNA]</scope>
    <source>
        <tissue>Embryo</tissue>
    </source>
</reference>
<organism>
    <name type="scientific">Xenopus tropicalis</name>
    <name type="common">Western clawed frog</name>
    <name type="synonym">Silurana tropicalis</name>
    <dbReference type="NCBI Taxonomy" id="8364"/>
    <lineage>
        <taxon>Eukaryota</taxon>
        <taxon>Metazoa</taxon>
        <taxon>Chordata</taxon>
        <taxon>Craniata</taxon>
        <taxon>Vertebrata</taxon>
        <taxon>Euteleostomi</taxon>
        <taxon>Amphibia</taxon>
        <taxon>Batrachia</taxon>
        <taxon>Anura</taxon>
        <taxon>Pipoidea</taxon>
        <taxon>Pipidae</taxon>
        <taxon>Xenopodinae</taxon>
        <taxon>Xenopus</taxon>
        <taxon>Silurana</taxon>
    </lineage>
</organism>
<dbReference type="EMBL" id="BC074631">
    <property type="protein sequence ID" value="AAH74631.1"/>
    <property type="molecule type" value="mRNA"/>
</dbReference>
<dbReference type="RefSeq" id="NP_001004835.1">
    <property type="nucleotide sequence ID" value="NM_001004835.1"/>
</dbReference>
<dbReference type="SMR" id="Q6GL74"/>
<dbReference type="FunCoup" id="Q6GL74">
    <property type="interactions" value="1033"/>
</dbReference>
<dbReference type="DNASU" id="448101"/>
<dbReference type="GeneID" id="448101"/>
<dbReference type="KEGG" id="xtr:448101"/>
<dbReference type="CTD" id="29105"/>
<dbReference type="Xenbase" id="XB-GENE-6455885">
    <property type="gene designation" value="cfap20"/>
</dbReference>
<dbReference type="InParanoid" id="Q6GL74"/>
<dbReference type="OMA" id="TTYISCP"/>
<dbReference type="OrthoDB" id="7486196at2759"/>
<dbReference type="Proteomes" id="UP000008143">
    <property type="component" value="Chromosome 6"/>
</dbReference>
<dbReference type="GO" id="GO:0005879">
    <property type="term" value="C:axonemal microtubule"/>
    <property type="evidence" value="ECO:0000250"/>
    <property type="project" value="UniProtKB"/>
</dbReference>
<dbReference type="GO" id="GO:0005814">
    <property type="term" value="C:centriole"/>
    <property type="evidence" value="ECO:0000250"/>
    <property type="project" value="UniProtKB"/>
</dbReference>
<dbReference type="GO" id="GO:0036064">
    <property type="term" value="C:ciliary basal body"/>
    <property type="evidence" value="ECO:0000250"/>
    <property type="project" value="UniProtKB"/>
</dbReference>
<dbReference type="GO" id="GO:0005929">
    <property type="term" value="C:cilium"/>
    <property type="evidence" value="ECO:0000250"/>
    <property type="project" value="UniProtKB"/>
</dbReference>
<dbReference type="GO" id="GO:0005634">
    <property type="term" value="C:nucleus"/>
    <property type="evidence" value="ECO:0007669"/>
    <property type="project" value="UniProtKB-SubCell"/>
</dbReference>
<dbReference type="GO" id="GO:0060271">
    <property type="term" value="P:cilium assembly"/>
    <property type="evidence" value="ECO:0000250"/>
    <property type="project" value="UniProtKB"/>
</dbReference>
<dbReference type="GO" id="GO:2000147">
    <property type="term" value="P:positive regulation of cell motility"/>
    <property type="evidence" value="ECO:0000250"/>
    <property type="project" value="UniProtKB"/>
</dbReference>
<dbReference type="GO" id="GO:2000253">
    <property type="term" value="P:positive regulation of feeding behavior"/>
    <property type="evidence" value="ECO:0000250"/>
    <property type="project" value="UniProtKB"/>
</dbReference>
<dbReference type="GO" id="GO:0018095">
    <property type="term" value="P:protein polyglutamylation"/>
    <property type="evidence" value="ECO:0000250"/>
    <property type="project" value="UniProtKB"/>
</dbReference>
<dbReference type="GO" id="GO:0060296">
    <property type="term" value="P:regulation of cilium beat frequency involved in ciliary motility"/>
    <property type="evidence" value="ECO:0000250"/>
    <property type="project" value="UniProtKB"/>
</dbReference>
<dbReference type="InterPro" id="IPR040441">
    <property type="entry name" value="CFA20/CFAP20DC"/>
</dbReference>
<dbReference type="InterPro" id="IPR007714">
    <property type="entry name" value="CFA20_dom"/>
</dbReference>
<dbReference type="PANTHER" id="PTHR12458">
    <property type="entry name" value="ORF PROTEIN"/>
    <property type="match status" value="1"/>
</dbReference>
<dbReference type="Pfam" id="PF05018">
    <property type="entry name" value="CFA20_dom"/>
    <property type="match status" value="1"/>
</dbReference>
<gene>
    <name type="primary">cfap20</name>
</gene>
<feature type="chain" id="PRO_0000296404" description="Cilia- and flagella-associated protein 20">
    <location>
        <begin position="1"/>
        <end position="193"/>
    </location>
</feature>
<proteinExistence type="evidence at transcript level"/>
<comment type="function">
    <text evidence="2">Cilium- and flagellum-specific protein that plays a role in axonemal structure organization and motility. Microtubule inner protein (MIP) part of the dynein-decorated doublet microtubules (DMTs) in cilia axoneme, which is required for motile cilia beating. Involved in the regulation of the size and morphology of cilia. Required for axonemal microtubules polyglutamylation.</text>
</comment>
<comment type="subcellular location">
    <subcellularLocation>
        <location evidence="2">Nucleus</location>
    </subcellularLocation>
    <subcellularLocation>
        <location evidence="2">Cytoplasm</location>
        <location evidence="2">Cytoskeleton</location>
        <location evidence="2">Microtubule organizing center</location>
        <location evidence="2">Centrosome</location>
        <location evidence="2">Centriole</location>
    </subcellularLocation>
    <subcellularLocation>
        <location evidence="2">Cytoplasm</location>
        <location evidence="2">Cytoskeleton</location>
        <location evidence="2">Cilium basal body</location>
    </subcellularLocation>
    <subcellularLocation>
        <location evidence="1">Cytoplasm</location>
        <location evidence="1">Cytoskeleton</location>
        <location evidence="1">Cilium axoneme</location>
    </subcellularLocation>
</comment>
<comment type="similarity">
    <text evidence="3">Belongs to the CFAP20 family.</text>
</comment>
<evidence type="ECO:0000250" key="1">
    <source>
        <dbReference type="UniProtKB" id="Q6B857"/>
    </source>
</evidence>
<evidence type="ECO:0000250" key="2">
    <source>
        <dbReference type="UniProtKB" id="Q9Y6A4"/>
    </source>
</evidence>
<evidence type="ECO:0000305" key="3"/>